<feature type="chain" id="PRO_1000015119" description="Small ribosomal subunit protein uS10">
    <location>
        <begin position="1"/>
        <end position="106"/>
    </location>
</feature>
<proteinExistence type="inferred from homology"/>
<name>RS10_SOLUE</name>
<evidence type="ECO:0000255" key="1">
    <source>
        <dbReference type="HAMAP-Rule" id="MF_00508"/>
    </source>
</evidence>
<evidence type="ECO:0000305" key="2"/>
<organism>
    <name type="scientific">Solibacter usitatus (strain Ellin6076)</name>
    <dbReference type="NCBI Taxonomy" id="234267"/>
    <lineage>
        <taxon>Bacteria</taxon>
        <taxon>Pseudomonadati</taxon>
        <taxon>Acidobacteriota</taxon>
        <taxon>Terriglobia</taxon>
        <taxon>Bryobacterales</taxon>
        <taxon>Solibacteraceae</taxon>
        <taxon>Candidatus Solibacter</taxon>
    </lineage>
</organism>
<dbReference type="EMBL" id="CP000473">
    <property type="protein sequence ID" value="ABJ86074.1"/>
    <property type="molecule type" value="Genomic_DNA"/>
</dbReference>
<dbReference type="SMR" id="Q01W91"/>
<dbReference type="FunCoup" id="Q01W91">
    <property type="interactions" value="721"/>
</dbReference>
<dbReference type="STRING" id="234267.Acid_5119"/>
<dbReference type="KEGG" id="sus:Acid_5119"/>
<dbReference type="eggNOG" id="COG0051">
    <property type="taxonomic scope" value="Bacteria"/>
</dbReference>
<dbReference type="HOGENOM" id="CLU_122625_1_3_0"/>
<dbReference type="InParanoid" id="Q01W91"/>
<dbReference type="OrthoDB" id="9804464at2"/>
<dbReference type="GO" id="GO:1990904">
    <property type="term" value="C:ribonucleoprotein complex"/>
    <property type="evidence" value="ECO:0007669"/>
    <property type="project" value="UniProtKB-KW"/>
</dbReference>
<dbReference type="GO" id="GO:0005840">
    <property type="term" value="C:ribosome"/>
    <property type="evidence" value="ECO:0007669"/>
    <property type="project" value="UniProtKB-KW"/>
</dbReference>
<dbReference type="GO" id="GO:0003735">
    <property type="term" value="F:structural constituent of ribosome"/>
    <property type="evidence" value="ECO:0007669"/>
    <property type="project" value="InterPro"/>
</dbReference>
<dbReference type="GO" id="GO:0000049">
    <property type="term" value="F:tRNA binding"/>
    <property type="evidence" value="ECO:0007669"/>
    <property type="project" value="UniProtKB-UniRule"/>
</dbReference>
<dbReference type="GO" id="GO:0006412">
    <property type="term" value="P:translation"/>
    <property type="evidence" value="ECO:0007669"/>
    <property type="project" value="UniProtKB-UniRule"/>
</dbReference>
<dbReference type="FunFam" id="3.30.70.600:FF:000001">
    <property type="entry name" value="30S ribosomal protein S10"/>
    <property type="match status" value="1"/>
</dbReference>
<dbReference type="Gene3D" id="3.30.70.600">
    <property type="entry name" value="Ribosomal protein S10 domain"/>
    <property type="match status" value="1"/>
</dbReference>
<dbReference type="HAMAP" id="MF_00508">
    <property type="entry name" value="Ribosomal_uS10"/>
    <property type="match status" value="1"/>
</dbReference>
<dbReference type="InterPro" id="IPR001848">
    <property type="entry name" value="Ribosomal_uS10"/>
</dbReference>
<dbReference type="InterPro" id="IPR018268">
    <property type="entry name" value="Ribosomal_uS10_CS"/>
</dbReference>
<dbReference type="InterPro" id="IPR027486">
    <property type="entry name" value="Ribosomal_uS10_dom"/>
</dbReference>
<dbReference type="InterPro" id="IPR036838">
    <property type="entry name" value="Ribosomal_uS10_dom_sf"/>
</dbReference>
<dbReference type="NCBIfam" id="NF001861">
    <property type="entry name" value="PRK00596.1"/>
    <property type="match status" value="1"/>
</dbReference>
<dbReference type="NCBIfam" id="TIGR01049">
    <property type="entry name" value="rpsJ_bact"/>
    <property type="match status" value="1"/>
</dbReference>
<dbReference type="PANTHER" id="PTHR11700">
    <property type="entry name" value="30S RIBOSOMAL PROTEIN S10 FAMILY MEMBER"/>
    <property type="match status" value="1"/>
</dbReference>
<dbReference type="Pfam" id="PF00338">
    <property type="entry name" value="Ribosomal_S10"/>
    <property type="match status" value="1"/>
</dbReference>
<dbReference type="PRINTS" id="PR00971">
    <property type="entry name" value="RIBOSOMALS10"/>
</dbReference>
<dbReference type="SMART" id="SM01403">
    <property type="entry name" value="Ribosomal_S10"/>
    <property type="match status" value="1"/>
</dbReference>
<dbReference type="SUPFAM" id="SSF54999">
    <property type="entry name" value="Ribosomal protein S10"/>
    <property type="match status" value="1"/>
</dbReference>
<dbReference type="PROSITE" id="PS00361">
    <property type="entry name" value="RIBOSOMAL_S10"/>
    <property type="match status" value="1"/>
</dbReference>
<gene>
    <name evidence="1" type="primary">rpsJ</name>
    <name type="ordered locus">Acid_5119</name>
</gene>
<reference key="1">
    <citation type="journal article" date="2009" name="Appl. Environ. Microbiol.">
        <title>Three genomes from the phylum Acidobacteria provide insight into the lifestyles of these microorganisms in soils.</title>
        <authorList>
            <person name="Ward N.L."/>
            <person name="Challacombe J.F."/>
            <person name="Janssen P.H."/>
            <person name="Henrissat B."/>
            <person name="Coutinho P.M."/>
            <person name="Wu M."/>
            <person name="Xie G."/>
            <person name="Haft D.H."/>
            <person name="Sait M."/>
            <person name="Badger J."/>
            <person name="Barabote R.D."/>
            <person name="Bradley B."/>
            <person name="Brettin T.S."/>
            <person name="Brinkac L.M."/>
            <person name="Bruce D."/>
            <person name="Creasy T."/>
            <person name="Daugherty S.C."/>
            <person name="Davidsen T.M."/>
            <person name="DeBoy R.T."/>
            <person name="Detter J.C."/>
            <person name="Dodson R.J."/>
            <person name="Durkin A.S."/>
            <person name="Ganapathy A."/>
            <person name="Gwinn-Giglio M."/>
            <person name="Han C.S."/>
            <person name="Khouri H."/>
            <person name="Kiss H."/>
            <person name="Kothari S.P."/>
            <person name="Madupu R."/>
            <person name="Nelson K.E."/>
            <person name="Nelson W.C."/>
            <person name="Paulsen I."/>
            <person name="Penn K."/>
            <person name="Ren Q."/>
            <person name="Rosovitz M.J."/>
            <person name="Selengut J.D."/>
            <person name="Shrivastava S."/>
            <person name="Sullivan S.A."/>
            <person name="Tapia R."/>
            <person name="Thompson L.S."/>
            <person name="Watkins K.L."/>
            <person name="Yang Q."/>
            <person name="Yu C."/>
            <person name="Zafar N."/>
            <person name="Zhou L."/>
            <person name="Kuske C.R."/>
        </authorList>
    </citation>
    <scope>NUCLEOTIDE SEQUENCE [LARGE SCALE GENOMIC DNA]</scope>
    <source>
        <strain>Ellin6076</strain>
    </source>
</reference>
<accession>Q01W91</accession>
<sequence length="106" mass="11985">MALRERIRIRLKAYDHRILDQSTTEIVDTAKRTGATVAGPIPLPTSRSITTVLRSPHVDKKSREQFEIRTHKRLLDILEPTQQTVDALMKLDLPAGVDVEIKAFGK</sequence>
<keyword id="KW-0687">Ribonucleoprotein</keyword>
<keyword id="KW-0689">Ribosomal protein</keyword>
<comment type="function">
    <text evidence="1">Involved in the binding of tRNA to the ribosomes.</text>
</comment>
<comment type="subunit">
    <text evidence="1">Part of the 30S ribosomal subunit.</text>
</comment>
<comment type="similarity">
    <text evidence="1">Belongs to the universal ribosomal protein uS10 family.</text>
</comment>
<protein>
    <recommendedName>
        <fullName evidence="1">Small ribosomal subunit protein uS10</fullName>
    </recommendedName>
    <alternativeName>
        <fullName evidence="2">30S ribosomal protein S10</fullName>
    </alternativeName>
</protein>